<name>PIMT_RUEPO</name>
<gene>
    <name evidence="1" type="primary">pcm</name>
    <name type="ordered locus">SPO2687</name>
</gene>
<sequence>MSGPDPETKMQFLFALRSKGVTDKRVLAAMEEVDRGLFVRGLFSGRAYEDMPLPIACGQTISQPSVVGLMTQALEVNPRDKVLEVGTGSGYQAAILAKLARRVYTVDRHARLVRAAQLVFQQLQLVNITTMTADGSFGLPDQAPFDRIIVTAAAEDAPGPLLAQLKIGGIMVLPVGQSDTVQTLIRVRRTEQGFDYDELRPVRFVPLLEGLGKDG</sequence>
<comment type="function">
    <text evidence="1">Catalyzes the methyl esterification of L-isoaspartyl residues in peptides and proteins that result from spontaneous decomposition of normal L-aspartyl and L-asparaginyl residues. It plays a role in the repair and/or degradation of damaged proteins.</text>
</comment>
<comment type="catalytic activity">
    <reaction evidence="1">
        <text>[protein]-L-isoaspartate + S-adenosyl-L-methionine = [protein]-L-isoaspartate alpha-methyl ester + S-adenosyl-L-homocysteine</text>
        <dbReference type="Rhea" id="RHEA:12705"/>
        <dbReference type="Rhea" id="RHEA-COMP:12143"/>
        <dbReference type="Rhea" id="RHEA-COMP:12144"/>
        <dbReference type="ChEBI" id="CHEBI:57856"/>
        <dbReference type="ChEBI" id="CHEBI:59789"/>
        <dbReference type="ChEBI" id="CHEBI:90596"/>
        <dbReference type="ChEBI" id="CHEBI:90598"/>
        <dbReference type="EC" id="2.1.1.77"/>
    </reaction>
</comment>
<comment type="subcellular location">
    <subcellularLocation>
        <location evidence="1">Cytoplasm</location>
    </subcellularLocation>
</comment>
<comment type="similarity">
    <text evidence="1">Belongs to the methyltransferase superfamily. L-isoaspartyl/D-aspartyl protein methyltransferase family.</text>
</comment>
<proteinExistence type="inferred from homology"/>
<dbReference type="EC" id="2.1.1.77" evidence="1"/>
<dbReference type="EMBL" id="CP000031">
    <property type="protein sequence ID" value="AAV95932.1"/>
    <property type="molecule type" value="Genomic_DNA"/>
</dbReference>
<dbReference type="RefSeq" id="WP_011048389.1">
    <property type="nucleotide sequence ID" value="NC_003911.12"/>
</dbReference>
<dbReference type="SMR" id="Q5LQ09"/>
<dbReference type="STRING" id="246200.SPO2687"/>
<dbReference type="PaxDb" id="246200-SPO2687"/>
<dbReference type="KEGG" id="sil:SPO2687"/>
<dbReference type="eggNOG" id="COG2518">
    <property type="taxonomic scope" value="Bacteria"/>
</dbReference>
<dbReference type="HOGENOM" id="CLU_055432_2_0_5"/>
<dbReference type="OrthoDB" id="9810066at2"/>
<dbReference type="Proteomes" id="UP000001023">
    <property type="component" value="Chromosome"/>
</dbReference>
<dbReference type="GO" id="GO:0005737">
    <property type="term" value="C:cytoplasm"/>
    <property type="evidence" value="ECO:0007669"/>
    <property type="project" value="UniProtKB-SubCell"/>
</dbReference>
<dbReference type="GO" id="GO:0004719">
    <property type="term" value="F:protein-L-isoaspartate (D-aspartate) O-methyltransferase activity"/>
    <property type="evidence" value="ECO:0007669"/>
    <property type="project" value="UniProtKB-UniRule"/>
</dbReference>
<dbReference type="GO" id="GO:0032259">
    <property type="term" value="P:methylation"/>
    <property type="evidence" value="ECO:0007669"/>
    <property type="project" value="UniProtKB-KW"/>
</dbReference>
<dbReference type="GO" id="GO:0036211">
    <property type="term" value="P:protein modification process"/>
    <property type="evidence" value="ECO:0007669"/>
    <property type="project" value="UniProtKB-UniRule"/>
</dbReference>
<dbReference type="GO" id="GO:0030091">
    <property type="term" value="P:protein repair"/>
    <property type="evidence" value="ECO:0007669"/>
    <property type="project" value="UniProtKB-UniRule"/>
</dbReference>
<dbReference type="CDD" id="cd02440">
    <property type="entry name" value="AdoMet_MTases"/>
    <property type="match status" value="1"/>
</dbReference>
<dbReference type="FunFam" id="3.40.50.150:FF:000010">
    <property type="entry name" value="Protein-L-isoaspartate O-methyltransferase"/>
    <property type="match status" value="1"/>
</dbReference>
<dbReference type="Gene3D" id="3.40.50.150">
    <property type="entry name" value="Vaccinia Virus protein VP39"/>
    <property type="match status" value="1"/>
</dbReference>
<dbReference type="HAMAP" id="MF_00090">
    <property type="entry name" value="PIMT"/>
    <property type="match status" value="1"/>
</dbReference>
<dbReference type="InterPro" id="IPR000682">
    <property type="entry name" value="PCMT"/>
</dbReference>
<dbReference type="InterPro" id="IPR029063">
    <property type="entry name" value="SAM-dependent_MTases_sf"/>
</dbReference>
<dbReference type="NCBIfam" id="TIGR00080">
    <property type="entry name" value="pimt"/>
    <property type="match status" value="1"/>
</dbReference>
<dbReference type="NCBIfam" id="NF001453">
    <property type="entry name" value="PRK00312.1"/>
    <property type="match status" value="1"/>
</dbReference>
<dbReference type="PANTHER" id="PTHR11579">
    <property type="entry name" value="PROTEIN-L-ISOASPARTATE O-METHYLTRANSFERASE"/>
    <property type="match status" value="1"/>
</dbReference>
<dbReference type="PANTHER" id="PTHR11579:SF0">
    <property type="entry name" value="PROTEIN-L-ISOASPARTATE(D-ASPARTATE) O-METHYLTRANSFERASE"/>
    <property type="match status" value="1"/>
</dbReference>
<dbReference type="Pfam" id="PF01135">
    <property type="entry name" value="PCMT"/>
    <property type="match status" value="1"/>
</dbReference>
<dbReference type="SUPFAM" id="SSF53335">
    <property type="entry name" value="S-adenosyl-L-methionine-dependent methyltransferases"/>
    <property type="match status" value="1"/>
</dbReference>
<dbReference type="PROSITE" id="PS01279">
    <property type="entry name" value="PCMT"/>
    <property type="match status" value="1"/>
</dbReference>
<reference key="1">
    <citation type="journal article" date="2004" name="Nature">
        <title>Genome sequence of Silicibacter pomeroyi reveals adaptations to the marine environment.</title>
        <authorList>
            <person name="Moran M.A."/>
            <person name="Buchan A."/>
            <person name="Gonzalez J.M."/>
            <person name="Heidelberg J.F."/>
            <person name="Whitman W.B."/>
            <person name="Kiene R.P."/>
            <person name="Henriksen J.R."/>
            <person name="King G.M."/>
            <person name="Belas R."/>
            <person name="Fuqua C."/>
            <person name="Brinkac L.M."/>
            <person name="Lewis M."/>
            <person name="Johri S."/>
            <person name="Weaver B."/>
            <person name="Pai G."/>
            <person name="Eisen J.A."/>
            <person name="Rahe E."/>
            <person name="Sheldon W.M."/>
            <person name="Ye W."/>
            <person name="Miller T.R."/>
            <person name="Carlton J."/>
            <person name="Rasko D.A."/>
            <person name="Paulsen I.T."/>
            <person name="Ren Q."/>
            <person name="Daugherty S.C."/>
            <person name="DeBoy R.T."/>
            <person name="Dodson R.J."/>
            <person name="Durkin A.S."/>
            <person name="Madupu R."/>
            <person name="Nelson W.C."/>
            <person name="Sullivan S.A."/>
            <person name="Rosovitz M.J."/>
            <person name="Haft D.H."/>
            <person name="Selengut J."/>
            <person name="Ward N."/>
        </authorList>
    </citation>
    <scope>NUCLEOTIDE SEQUENCE [LARGE SCALE GENOMIC DNA]</scope>
    <source>
        <strain>ATCC 700808 / DSM 15171 / DSS-3</strain>
    </source>
</reference>
<reference key="2">
    <citation type="journal article" date="2014" name="Stand. Genomic Sci.">
        <title>An updated genome annotation for the model marine bacterium Ruegeria pomeroyi DSS-3.</title>
        <authorList>
            <person name="Rivers A.R."/>
            <person name="Smith C.B."/>
            <person name="Moran M.A."/>
        </authorList>
    </citation>
    <scope>GENOME REANNOTATION</scope>
    <source>
        <strain>ATCC 700808 / DSM 15171 / DSS-3</strain>
    </source>
</reference>
<keyword id="KW-0963">Cytoplasm</keyword>
<keyword id="KW-0489">Methyltransferase</keyword>
<keyword id="KW-1185">Reference proteome</keyword>
<keyword id="KW-0949">S-adenosyl-L-methionine</keyword>
<keyword id="KW-0808">Transferase</keyword>
<accession>Q5LQ09</accession>
<evidence type="ECO:0000255" key="1">
    <source>
        <dbReference type="HAMAP-Rule" id="MF_00090"/>
    </source>
</evidence>
<organism>
    <name type="scientific">Ruegeria pomeroyi (strain ATCC 700808 / DSM 15171 / DSS-3)</name>
    <name type="common">Silicibacter pomeroyi</name>
    <dbReference type="NCBI Taxonomy" id="246200"/>
    <lineage>
        <taxon>Bacteria</taxon>
        <taxon>Pseudomonadati</taxon>
        <taxon>Pseudomonadota</taxon>
        <taxon>Alphaproteobacteria</taxon>
        <taxon>Rhodobacterales</taxon>
        <taxon>Roseobacteraceae</taxon>
        <taxon>Ruegeria</taxon>
    </lineage>
</organism>
<protein>
    <recommendedName>
        <fullName evidence="1">Protein-L-isoaspartate O-methyltransferase</fullName>
        <ecNumber evidence="1">2.1.1.77</ecNumber>
    </recommendedName>
    <alternativeName>
        <fullName evidence="1">L-isoaspartyl protein carboxyl methyltransferase</fullName>
    </alternativeName>
    <alternativeName>
        <fullName evidence="1">Protein L-isoaspartyl methyltransferase</fullName>
    </alternativeName>
    <alternativeName>
        <fullName evidence="1">Protein-beta-aspartate methyltransferase</fullName>
        <shortName evidence="1">PIMT</shortName>
    </alternativeName>
</protein>
<feature type="chain" id="PRO_0000351939" description="Protein-L-isoaspartate O-methyltransferase">
    <location>
        <begin position="1"/>
        <end position="215"/>
    </location>
</feature>
<feature type="active site" evidence="1">
    <location>
        <position position="62"/>
    </location>
</feature>